<gene>
    <name evidence="1" type="primary">GALE</name>
</gene>
<accession>Q3T105</accession>
<accession>F2Z4C3</accession>
<dbReference type="EC" id="5.1.3.2" evidence="1"/>
<dbReference type="EC" id="5.1.3.7" evidence="1"/>
<dbReference type="EMBL" id="DAAA02006426">
    <property type="status" value="NOT_ANNOTATED_CDS"/>
    <property type="molecule type" value="Genomic_DNA"/>
</dbReference>
<dbReference type="EMBL" id="BC102185">
    <property type="protein sequence ID" value="AAI02186.2"/>
    <property type="molecule type" value="mRNA"/>
</dbReference>
<dbReference type="RefSeq" id="NP_001193137.1">
    <property type="nucleotide sequence ID" value="NM_001206208.1"/>
</dbReference>
<dbReference type="RefSeq" id="XP_005203235.4">
    <property type="nucleotide sequence ID" value="XM_005203178.5"/>
</dbReference>
<dbReference type="RefSeq" id="XP_005203236.4">
    <property type="nucleotide sequence ID" value="XM_005203179.5"/>
</dbReference>
<dbReference type="SMR" id="Q3T105"/>
<dbReference type="FunCoup" id="Q3T105">
    <property type="interactions" value="408"/>
</dbReference>
<dbReference type="STRING" id="9913.ENSBTAP00000006586"/>
<dbReference type="PaxDb" id="9913-ENSBTAP00000006586"/>
<dbReference type="GeneID" id="523154"/>
<dbReference type="KEGG" id="bta:523154"/>
<dbReference type="CTD" id="2582"/>
<dbReference type="eggNOG" id="KOG1371">
    <property type="taxonomic scope" value="Eukaryota"/>
</dbReference>
<dbReference type="HOGENOM" id="CLU_007383_1_10_1"/>
<dbReference type="InParanoid" id="Q3T105"/>
<dbReference type="OrthoDB" id="9402762at2759"/>
<dbReference type="TreeFam" id="TF105800"/>
<dbReference type="SABIO-RK" id="Q3T105"/>
<dbReference type="UniPathway" id="UPA00214"/>
<dbReference type="Proteomes" id="UP000009136">
    <property type="component" value="Unplaced"/>
</dbReference>
<dbReference type="GO" id="GO:0005829">
    <property type="term" value="C:cytosol"/>
    <property type="evidence" value="ECO:0000318"/>
    <property type="project" value="GO_Central"/>
</dbReference>
<dbReference type="GO" id="GO:0003978">
    <property type="term" value="F:UDP-glucose 4-epimerase activity"/>
    <property type="evidence" value="ECO:0000318"/>
    <property type="project" value="GO_Central"/>
</dbReference>
<dbReference type="GO" id="GO:0003974">
    <property type="term" value="F:UDP-N-acetylglucosamine 4-epimerase activity"/>
    <property type="evidence" value="ECO:0007669"/>
    <property type="project" value="UniProtKB-EC"/>
</dbReference>
<dbReference type="GO" id="GO:0033499">
    <property type="term" value="P:galactose catabolic process via UDP-galactose, Leloir pathway"/>
    <property type="evidence" value="ECO:0000318"/>
    <property type="project" value="GO_Central"/>
</dbReference>
<dbReference type="CDD" id="cd05247">
    <property type="entry name" value="UDP_G4E_1_SDR_e"/>
    <property type="match status" value="1"/>
</dbReference>
<dbReference type="Gene3D" id="3.40.50.720">
    <property type="entry name" value="NAD(P)-binding Rossmann-like Domain"/>
    <property type="match status" value="1"/>
</dbReference>
<dbReference type="Gene3D" id="3.90.25.10">
    <property type="entry name" value="UDP-galactose 4-epimerase, domain 1"/>
    <property type="match status" value="1"/>
</dbReference>
<dbReference type="InterPro" id="IPR016040">
    <property type="entry name" value="NAD(P)-bd_dom"/>
</dbReference>
<dbReference type="InterPro" id="IPR036291">
    <property type="entry name" value="NAD(P)-bd_dom_sf"/>
</dbReference>
<dbReference type="InterPro" id="IPR005886">
    <property type="entry name" value="UDP_G4E"/>
</dbReference>
<dbReference type="NCBIfam" id="TIGR01179">
    <property type="entry name" value="galE"/>
    <property type="match status" value="1"/>
</dbReference>
<dbReference type="NCBIfam" id="NF007956">
    <property type="entry name" value="PRK10675.1"/>
    <property type="match status" value="1"/>
</dbReference>
<dbReference type="PANTHER" id="PTHR43725">
    <property type="entry name" value="UDP-GLUCOSE 4-EPIMERASE"/>
    <property type="match status" value="1"/>
</dbReference>
<dbReference type="PANTHER" id="PTHR43725:SF47">
    <property type="entry name" value="UDP-GLUCOSE 4-EPIMERASE"/>
    <property type="match status" value="1"/>
</dbReference>
<dbReference type="Pfam" id="PF16363">
    <property type="entry name" value="GDP_Man_Dehyd"/>
    <property type="match status" value="1"/>
</dbReference>
<dbReference type="PRINTS" id="PR01713">
    <property type="entry name" value="NUCEPIMERASE"/>
</dbReference>
<dbReference type="SUPFAM" id="SSF51735">
    <property type="entry name" value="NAD(P)-binding Rossmann-fold domains"/>
    <property type="match status" value="1"/>
</dbReference>
<keyword id="KW-0119">Carbohydrate metabolism</keyword>
<keyword id="KW-0299">Galactose metabolism</keyword>
<keyword id="KW-0413">Isomerase</keyword>
<keyword id="KW-0520">NAD</keyword>
<keyword id="KW-1185">Reference proteome</keyword>
<protein>
    <recommendedName>
        <fullName evidence="1">UDP-glucose 4-epimerase</fullName>
        <ecNumber evidence="1">5.1.3.2</ecNumber>
    </recommendedName>
    <alternativeName>
        <fullName evidence="1">Galactowaldenase</fullName>
    </alternativeName>
    <alternativeName>
        <fullName evidence="1">UDP-N-acetylglucosamine 4-epimerase</fullName>
        <shortName evidence="1">UDP-GlcNAc 4-epimerase</shortName>
        <ecNumber evidence="1">5.1.3.7</ecNumber>
    </alternativeName>
    <alternativeName>
        <fullName evidence="1">UDP-galactosamine 4-epimerase</fullName>
        <shortName evidence="1">UDP-GalNAc 4-epimerase</shortName>
    </alternativeName>
    <alternativeName>
        <fullName evidence="1">UDP-galactose 4-epimerase</fullName>
    </alternativeName>
</protein>
<reference key="1">
    <citation type="journal article" date="2009" name="Genome Biol.">
        <title>A whole-genome assembly of the domestic cow, Bos taurus.</title>
        <authorList>
            <person name="Zimin A.V."/>
            <person name="Delcher A.L."/>
            <person name="Florea L."/>
            <person name="Kelley D.R."/>
            <person name="Schatz M.C."/>
            <person name="Puiu D."/>
            <person name="Hanrahan F."/>
            <person name="Pertea G."/>
            <person name="Van Tassell C.P."/>
            <person name="Sonstegard T.S."/>
            <person name="Marcais G."/>
            <person name="Roberts M."/>
            <person name="Subramanian P."/>
            <person name="Yorke J.A."/>
            <person name="Salzberg S.L."/>
        </authorList>
    </citation>
    <scope>NUCLEOTIDE SEQUENCE [LARGE SCALE GENOMIC DNA]</scope>
    <source>
        <strain>Hereford</strain>
    </source>
</reference>
<reference key="2">
    <citation type="submission" date="2005-08" db="EMBL/GenBank/DDBJ databases">
        <authorList>
            <consortium name="NIH - Mammalian Gene Collection (MGC) project"/>
        </authorList>
    </citation>
    <scope>NUCLEOTIDE SEQUENCE [LARGE SCALE MRNA]</scope>
</reference>
<feature type="chain" id="PRO_0000430606" description="UDP-glucose 4-epimerase">
    <location>
        <begin position="1"/>
        <end position="348"/>
    </location>
</feature>
<feature type="active site" description="Proton acceptor" evidence="1">
    <location>
        <position position="157"/>
    </location>
</feature>
<feature type="binding site" evidence="1">
    <location>
        <begin position="12"/>
        <end position="14"/>
    </location>
    <ligand>
        <name>NAD(+)</name>
        <dbReference type="ChEBI" id="CHEBI:57540"/>
    </ligand>
</feature>
<feature type="binding site" evidence="1">
    <location>
        <begin position="33"/>
        <end position="37"/>
    </location>
    <ligand>
        <name>NAD(+)</name>
        <dbReference type="ChEBI" id="CHEBI:57540"/>
    </ligand>
</feature>
<feature type="binding site" evidence="1">
    <location>
        <begin position="66"/>
        <end position="67"/>
    </location>
    <ligand>
        <name>NAD(+)</name>
        <dbReference type="ChEBI" id="CHEBI:57540"/>
    </ligand>
</feature>
<feature type="binding site" evidence="1">
    <location>
        <position position="88"/>
    </location>
    <ligand>
        <name>NAD(+)</name>
        <dbReference type="ChEBI" id="CHEBI:57540"/>
    </ligand>
</feature>
<feature type="binding site" evidence="1">
    <location>
        <position position="92"/>
    </location>
    <ligand>
        <name>NAD(+)</name>
        <dbReference type="ChEBI" id="CHEBI:57540"/>
    </ligand>
</feature>
<feature type="binding site" evidence="1">
    <location>
        <begin position="132"/>
        <end position="134"/>
    </location>
    <ligand>
        <name>substrate</name>
    </ligand>
</feature>
<feature type="binding site" evidence="1">
    <location>
        <position position="161"/>
    </location>
    <ligand>
        <name>NAD(+)</name>
        <dbReference type="ChEBI" id="CHEBI:57540"/>
    </ligand>
</feature>
<feature type="binding site" evidence="1">
    <location>
        <begin position="185"/>
        <end position="187"/>
    </location>
    <ligand>
        <name>substrate</name>
    </ligand>
</feature>
<feature type="binding site" evidence="1">
    <location>
        <position position="185"/>
    </location>
    <ligand>
        <name>NAD(+)</name>
        <dbReference type="ChEBI" id="CHEBI:57540"/>
    </ligand>
</feature>
<feature type="binding site" evidence="1">
    <location>
        <begin position="206"/>
        <end position="208"/>
    </location>
    <ligand>
        <name>substrate</name>
    </ligand>
</feature>
<feature type="binding site" evidence="1">
    <location>
        <begin position="224"/>
        <end position="226"/>
    </location>
    <ligand>
        <name>substrate</name>
    </ligand>
</feature>
<feature type="binding site" evidence="1">
    <location>
        <position position="239"/>
    </location>
    <ligand>
        <name>substrate</name>
    </ligand>
</feature>
<feature type="binding site" evidence="1">
    <location>
        <begin position="300"/>
        <end position="303"/>
    </location>
    <ligand>
        <name>substrate</name>
    </ligand>
</feature>
<proteinExistence type="evidence at transcript level"/>
<evidence type="ECO:0000250" key="1">
    <source>
        <dbReference type="UniProtKB" id="Q14376"/>
    </source>
</evidence>
<evidence type="ECO:0000255" key="2">
    <source>
        <dbReference type="RuleBase" id="RU004966"/>
    </source>
</evidence>
<organism>
    <name type="scientific">Bos taurus</name>
    <name type="common">Bovine</name>
    <dbReference type="NCBI Taxonomy" id="9913"/>
    <lineage>
        <taxon>Eukaryota</taxon>
        <taxon>Metazoa</taxon>
        <taxon>Chordata</taxon>
        <taxon>Craniata</taxon>
        <taxon>Vertebrata</taxon>
        <taxon>Euteleostomi</taxon>
        <taxon>Mammalia</taxon>
        <taxon>Eutheria</taxon>
        <taxon>Laurasiatheria</taxon>
        <taxon>Artiodactyla</taxon>
        <taxon>Ruminantia</taxon>
        <taxon>Pecora</taxon>
        <taxon>Bovidae</taxon>
        <taxon>Bovinae</taxon>
        <taxon>Bos</taxon>
    </lineage>
</organism>
<name>GALE_BOVIN</name>
<comment type="function">
    <text evidence="1">Catalyzes two distinct but analogous reactions: the reversible epimerization of UDP-glucose to UDP-galactose and the reversible epimerization of UDP-N-acetylglucosamine to UDP-N-acetylgalactosamine. The reaction with UDP-Gal plays a critical role in the Leloir pathway of galactose catabolism in which galactose is converted to the glycolytic intermediate glucose 6-phosphate. It contributes to the catabolism of dietary galactose and enables the endogenous biosynthesis of both UDP-Gal and UDP-GalNAc when exogenous sources are limited. Both UDP-sugar interconversions are important in the synthesis of glycoproteins and glycolipids.</text>
</comment>
<comment type="catalytic activity">
    <reaction evidence="1">
        <text>UDP-alpha-D-glucose = UDP-alpha-D-galactose</text>
        <dbReference type="Rhea" id="RHEA:22168"/>
        <dbReference type="ChEBI" id="CHEBI:58885"/>
        <dbReference type="ChEBI" id="CHEBI:66914"/>
        <dbReference type="EC" id="5.1.3.2"/>
    </reaction>
</comment>
<comment type="catalytic activity">
    <reaction evidence="1">
        <text>UDP-N-acetyl-alpha-D-glucosamine = UDP-N-acetyl-alpha-D-galactosamine</text>
        <dbReference type="Rhea" id="RHEA:20517"/>
        <dbReference type="ChEBI" id="CHEBI:57705"/>
        <dbReference type="ChEBI" id="CHEBI:67138"/>
        <dbReference type="EC" id="5.1.3.7"/>
    </reaction>
</comment>
<comment type="cofactor">
    <cofactor evidence="1">
        <name>NAD(+)</name>
        <dbReference type="ChEBI" id="CHEBI:57540"/>
    </cofactor>
</comment>
<comment type="pathway">
    <text>Carbohydrate metabolism; galactose metabolism.</text>
</comment>
<comment type="subunit">
    <text evidence="1">Homodimer.</text>
</comment>
<comment type="similarity">
    <text evidence="2">Belongs to the NAD(P)-dependent epimerase/dehydratase family.</text>
</comment>
<sequence>MAEKVLVTGGAGYIGSHTVLELLEAGYSPMVIDNFHNAIRGGGSMPESLRRVQDLTGRSVEFEEMDILDQAALQRLFKKHSFMAVIHFAGLKAVGESVQKPLDYYRVNLTGTIQLLEIMRAHGVKNLVFSSSATVYGNPQYLPLDEAHPTGGCTNPYGKSKFFIEEMIRDLCQADKAWNAVLLRYFNPIGAHASGCIGEDPQGIPNNLMPYVSQVAIGRREVLNVFGNDYDTEDGTGVRDYIHVVDLAKGHIAALRKLKEQCGCRIYNLGTGTGYSVLQMVQAMEKASGKKIPYKVVARREGDVAACYANPSLALKELGWSAALGLDRMCEDLWRWQKQNPSGFGTQA</sequence>